<gene>
    <name evidence="1" type="primary">rplV</name>
    <name type="ordered locus">BH10460</name>
</gene>
<evidence type="ECO:0000255" key="1">
    <source>
        <dbReference type="HAMAP-Rule" id="MF_01331"/>
    </source>
</evidence>
<evidence type="ECO:0000305" key="2"/>
<dbReference type="EMBL" id="BX897699">
    <property type="protein sequence ID" value="CAF27837.1"/>
    <property type="molecule type" value="Genomic_DNA"/>
</dbReference>
<dbReference type="RefSeq" id="WP_011180909.1">
    <property type="nucleotide sequence ID" value="NZ_LRIJ02000001.1"/>
</dbReference>
<dbReference type="SMR" id="Q6G2X0"/>
<dbReference type="PaxDb" id="283166-BH10460"/>
<dbReference type="EnsemblBacteria" id="CAF27837">
    <property type="protein sequence ID" value="CAF27837"/>
    <property type="gene ID" value="BH10460"/>
</dbReference>
<dbReference type="GeneID" id="92985268"/>
<dbReference type="KEGG" id="bhe:BH10460"/>
<dbReference type="eggNOG" id="COG0091">
    <property type="taxonomic scope" value="Bacteria"/>
</dbReference>
<dbReference type="OrthoDB" id="9805969at2"/>
<dbReference type="Proteomes" id="UP000000421">
    <property type="component" value="Chromosome"/>
</dbReference>
<dbReference type="GO" id="GO:0022625">
    <property type="term" value="C:cytosolic large ribosomal subunit"/>
    <property type="evidence" value="ECO:0007669"/>
    <property type="project" value="TreeGrafter"/>
</dbReference>
<dbReference type="GO" id="GO:0019843">
    <property type="term" value="F:rRNA binding"/>
    <property type="evidence" value="ECO:0007669"/>
    <property type="project" value="UniProtKB-UniRule"/>
</dbReference>
<dbReference type="GO" id="GO:0003735">
    <property type="term" value="F:structural constituent of ribosome"/>
    <property type="evidence" value="ECO:0007669"/>
    <property type="project" value="InterPro"/>
</dbReference>
<dbReference type="GO" id="GO:0006412">
    <property type="term" value="P:translation"/>
    <property type="evidence" value="ECO:0007669"/>
    <property type="project" value="UniProtKB-UniRule"/>
</dbReference>
<dbReference type="CDD" id="cd00336">
    <property type="entry name" value="Ribosomal_L22"/>
    <property type="match status" value="1"/>
</dbReference>
<dbReference type="Gene3D" id="3.90.470.10">
    <property type="entry name" value="Ribosomal protein L22/L17"/>
    <property type="match status" value="1"/>
</dbReference>
<dbReference type="HAMAP" id="MF_01331_B">
    <property type="entry name" value="Ribosomal_uL22_B"/>
    <property type="match status" value="1"/>
</dbReference>
<dbReference type="InterPro" id="IPR001063">
    <property type="entry name" value="Ribosomal_uL22"/>
</dbReference>
<dbReference type="InterPro" id="IPR005727">
    <property type="entry name" value="Ribosomal_uL22_bac/chlpt-type"/>
</dbReference>
<dbReference type="InterPro" id="IPR047867">
    <property type="entry name" value="Ribosomal_uL22_bac/org-type"/>
</dbReference>
<dbReference type="InterPro" id="IPR018260">
    <property type="entry name" value="Ribosomal_uL22_CS"/>
</dbReference>
<dbReference type="InterPro" id="IPR036394">
    <property type="entry name" value="Ribosomal_uL22_sf"/>
</dbReference>
<dbReference type="NCBIfam" id="TIGR01044">
    <property type="entry name" value="rplV_bact"/>
    <property type="match status" value="1"/>
</dbReference>
<dbReference type="PANTHER" id="PTHR13501">
    <property type="entry name" value="CHLOROPLAST 50S RIBOSOMAL PROTEIN L22-RELATED"/>
    <property type="match status" value="1"/>
</dbReference>
<dbReference type="PANTHER" id="PTHR13501:SF8">
    <property type="entry name" value="LARGE RIBOSOMAL SUBUNIT PROTEIN UL22M"/>
    <property type="match status" value="1"/>
</dbReference>
<dbReference type="Pfam" id="PF00237">
    <property type="entry name" value="Ribosomal_L22"/>
    <property type="match status" value="1"/>
</dbReference>
<dbReference type="SUPFAM" id="SSF54843">
    <property type="entry name" value="Ribosomal protein L22"/>
    <property type="match status" value="1"/>
</dbReference>
<dbReference type="PROSITE" id="PS00464">
    <property type="entry name" value="RIBOSOMAL_L22"/>
    <property type="match status" value="1"/>
</dbReference>
<sequence>MGKAKFPRQLKDNEAKAVARTIRVSPQKLNLVAAMIRGKKVGAALADLTFSRKRIAGTVKKTLESAVANAENNHDLDIDSLVVAEAYVGKSIVMKRFHVRGRGRASRIERPFSHLTIIVREVIEKVEVA</sequence>
<proteinExistence type="inferred from homology"/>
<reference key="1">
    <citation type="journal article" date="2004" name="Proc. Natl. Acad. Sci. U.S.A.">
        <title>The louse-borne human pathogen Bartonella quintana is a genomic derivative of the zoonotic agent Bartonella henselae.</title>
        <authorList>
            <person name="Alsmark U.C.M."/>
            <person name="Frank A.C."/>
            <person name="Karlberg E.O."/>
            <person name="Legault B.-A."/>
            <person name="Ardell D.H."/>
            <person name="Canbaeck B."/>
            <person name="Eriksson A.-S."/>
            <person name="Naeslund A.K."/>
            <person name="Handley S.A."/>
            <person name="Huvet M."/>
            <person name="La Scola B."/>
            <person name="Holmberg M."/>
            <person name="Andersson S.G.E."/>
        </authorList>
    </citation>
    <scope>NUCLEOTIDE SEQUENCE [LARGE SCALE GENOMIC DNA]</scope>
    <source>
        <strain>ATCC 49882 / DSM 28221 / CCUG 30454 / Houston 1</strain>
    </source>
</reference>
<accession>Q6G2X0</accession>
<comment type="function">
    <text evidence="1">This protein binds specifically to 23S rRNA; its binding is stimulated by other ribosomal proteins, e.g. L4, L17, and L20. It is important during the early stages of 50S assembly. It makes multiple contacts with different domains of the 23S rRNA in the assembled 50S subunit and ribosome (By similarity).</text>
</comment>
<comment type="function">
    <text evidence="1">The globular domain of the protein is located near the polypeptide exit tunnel on the outside of the subunit, while an extended beta-hairpin is found that lines the wall of the exit tunnel in the center of the 70S ribosome.</text>
</comment>
<comment type="subunit">
    <text evidence="1">Part of the 50S ribosomal subunit.</text>
</comment>
<comment type="similarity">
    <text evidence="1">Belongs to the universal ribosomal protein uL22 family.</text>
</comment>
<organism>
    <name type="scientific">Bartonella henselae (strain ATCC 49882 / DSM 28221 / CCUG 30454 / Houston 1)</name>
    <name type="common">Rochalimaea henselae</name>
    <dbReference type="NCBI Taxonomy" id="283166"/>
    <lineage>
        <taxon>Bacteria</taxon>
        <taxon>Pseudomonadati</taxon>
        <taxon>Pseudomonadota</taxon>
        <taxon>Alphaproteobacteria</taxon>
        <taxon>Hyphomicrobiales</taxon>
        <taxon>Bartonellaceae</taxon>
        <taxon>Bartonella</taxon>
    </lineage>
</organism>
<name>RL22_BARHE</name>
<keyword id="KW-0687">Ribonucleoprotein</keyword>
<keyword id="KW-0689">Ribosomal protein</keyword>
<keyword id="KW-0694">RNA-binding</keyword>
<keyword id="KW-0699">rRNA-binding</keyword>
<feature type="chain" id="PRO_0000243123" description="Large ribosomal subunit protein uL22">
    <location>
        <begin position="1"/>
        <end position="129"/>
    </location>
</feature>
<protein>
    <recommendedName>
        <fullName evidence="1">Large ribosomal subunit protein uL22</fullName>
    </recommendedName>
    <alternativeName>
        <fullName evidence="2">50S ribosomal protein L22</fullName>
    </alternativeName>
</protein>